<keyword id="KW-1185">Reference proteome</keyword>
<keyword id="KW-0694">RNA-binding</keyword>
<keyword id="KW-0804">Transcription</keyword>
<keyword id="KW-0889">Transcription antitermination</keyword>
<keyword id="KW-0805">Transcription regulation</keyword>
<gene>
    <name evidence="1" type="primary">nusB</name>
    <name type="ordered locus">GbCGDNIH1_1003</name>
</gene>
<sequence length="163" mass="18193">MNRRTRPRTASRVAAVQALFQGEQAQESLEAVIEQFVRFRLGALPGQDGFEDGRIPDAEVPLFSRIVRAATKEQDVIDPLLITALPAEWPLARLDPVLRALLRAGACELRMKDGPPPRVVINEYLDIAHGFFQGEEPRMVNGILNALARQLRPEEFAGERQQG</sequence>
<name>NUSB_GRABC</name>
<reference key="1">
    <citation type="journal article" date="2007" name="J. Bacteriol.">
        <title>Genome sequence analysis of the emerging human pathogenic acetic acid bacterium Granulibacter bethesdensis.</title>
        <authorList>
            <person name="Greenberg D.E."/>
            <person name="Porcella S.F."/>
            <person name="Zelazny A.M."/>
            <person name="Virtaneva K."/>
            <person name="Sturdevant D.E."/>
            <person name="Kupko J.J. III"/>
            <person name="Barbian K.D."/>
            <person name="Babar A."/>
            <person name="Dorward D.W."/>
            <person name="Holland S.M."/>
        </authorList>
    </citation>
    <scope>NUCLEOTIDE SEQUENCE [LARGE SCALE GENOMIC DNA]</scope>
    <source>
        <strain>ATCC BAA-1260 / CGDNIH1</strain>
    </source>
</reference>
<accession>Q0BTF1</accession>
<organism>
    <name type="scientific">Granulibacter bethesdensis (strain ATCC BAA-1260 / CGDNIH1)</name>
    <dbReference type="NCBI Taxonomy" id="391165"/>
    <lineage>
        <taxon>Bacteria</taxon>
        <taxon>Pseudomonadati</taxon>
        <taxon>Pseudomonadota</taxon>
        <taxon>Alphaproteobacteria</taxon>
        <taxon>Acetobacterales</taxon>
        <taxon>Acetobacteraceae</taxon>
        <taxon>Granulibacter</taxon>
    </lineage>
</organism>
<protein>
    <recommendedName>
        <fullName evidence="1">Transcription antitermination protein NusB</fullName>
    </recommendedName>
    <alternativeName>
        <fullName evidence="1">Antitermination factor NusB</fullName>
    </alternativeName>
</protein>
<evidence type="ECO:0000255" key="1">
    <source>
        <dbReference type="HAMAP-Rule" id="MF_00073"/>
    </source>
</evidence>
<feature type="chain" id="PRO_0000265527" description="Transcription antitermination protein NusB">
    <location>
        <begin position="1"/>
        <end position="163"/>
    </location>
</feature>
<comment type="function">
    <text evidence="1">Involved in transcription antitermination. Required for transcription of ribosomal RNA (rRNA) genes. Binds specifically to the boxA antiterminator sequence of the ribosomal RNA (rrn) operons.</text>
</comment>
<comment type="similarity">
    <text evidence="1">Belongs to the NusB family.</text>
</comment>
<dbReference type="EMBL" id="CP000394">
    <property type="protein sequence ID" value="ABI61901.1"/>
    <property type="molecule type" value="Genomic_DNA"/>
</dbReference>
<dbReference type="RefSeq" id="WP_011631710.1">
    <property type="nucleotide sequence ID" value="NC_008343.2"/>
</dbReference>
<dbReference type="SMR" id="Q0BTF1"/>
<dbReference type="STRING" id="391165.GbCGDNIH1_1003"/>
<dbReference type="GeneID" id="69745261"/>
<dbReference type="KEGG" id="gbe:GbCGDNIH1_1003"/>
<dbReference type="eggNOG" id="COG0781">
    <property type="taxonomic scope" value="Bacteria"/>
</dbReference>
<dbReference type="HOGENOM" id="CLU_087843_4_0_5"/>
<dbReference type="OrthoDB" id="9797817at2"/>
<dbReference type="Proteomes" id="UP000001963">
    <property type="component" value="Chromosome"/>
</dbReference>
<dbReference type="GO" id="GO:0005829">
    <property type="term" value="C:cytosol"/>
    <property type="evidence" value="ECO:0007669"/>
    <property type="project" value="TreeGrafter"/>
</dbReference>
<dbReference type="GO" id="GO:0003723">
    <property type="term" value="F:RNA binding"/>
    <property type="evidence" value="ECO:0007669"/>
    <property type="project" value="UniProtKB-UniRule"/>
</dbReference>
<dbReference type="GO" id="GO:0006353">
    <property type="term" value="P:DNA-templated transcription termination"/>
    <property type="evidence" value="ECO:0007669"/>
    <property type="project" value="UniProtKB-UniRule"/>
</dbReference>
<dbReference type="GO" id="GO:0031564">
    <property type="term" value="P:transcription antitermination"/>
    <property type="evidence" value="ECO:0007669"/>
    <property type="project" value="UniProtKB-KW"/>
</dbReference>
<dbReference type="Gene3D" id="1.10.940.10">
    <property type="entry name" value="NusB-like"/>
    <property type="match status" value="1"/>
</dbReference>
<dbReference type="HAMAP" id="MF_00073">
    <property type="entry name" value="NusB"/>
    <property type="match status" value="1"/>
</dbReference>
<dbReference type="InterPro" id="IPR035926">
    <property type="entry name" value="NusB-like_sf"/>
</dbReference>
<dbReference type="InterPro" id="IPR011605">
    <property type="entry name" value="NusB_fam"/>
</dbReference>
<dbReference type="InterPro" id="IPR006027">
    <property type="entry name" value="NusB_RsmB_TIM44"/>
</dbReference>
<dbReference type="NCBIfam" id="TIGR01951">
    <property type="entry name" value="nusB"/>
    <property type="match status" value="1"/>
</dbReference>
<dbReference type="PANTHER" id="PTHR11078:SF3">
    <property type="entry name" value="ANTITERMINATION NUSB DOMAIN-CONTAINING PROTEIN"/>
    <property type="match status" value="1"/>
</dbReference>
<dbReference type="PANTHER" id="PTHR11078">
    <property type="entry name" value="N UTILIZATION SUBSTANCE PROTEIN B-RELATED"/>
    <property type="match status" value="1"/>
</dbReference>
<dbReference type="Pfam" id="PF01029">
    <property type="entry name" value="NusB"/>
    <property type="match status" value="1"/>
</dbReference>
<dbReference type="SUPFAM" id="SSF48013">
    <property type="entry name" value="NusB-like"/>
    <property type="match status" value="1"/>
</dbReference>
<proteinExistence type="inferred from homology"/>